<name>YNAG_BACSU</name>
<evidence type="ECO:0000255" key="1"/>
<evidence type="ECO:0000305" key="2"/>
<gene>
    <name type="primary">ynaG</name>
    <name type="ordered locus">BSU17550</name>
</gene>
<reference key="1">
    <citation type="submission" date="1996-08" db="EMBL/GenBank/DDBJ databases">
        <title>Sequencing of a 26 kb region of the Bacillus subtilis genome downstream of spoVJ.</title>
        <authorList>
            <person name="Borchert S."/>
            <person name="Klein C."/>
            <person name="Piksa B."/>
            <person name="Hammelmann M."/>
            <person name="Entian K.-D."/>
        </authorList>
    </citation>
    <scope>NUCLEOTIDE SEQUENCE [GENOMIC DNA]</scope>
</reference>
<reference key="2">
    <citation type="journal article" date="1997" name="Nature">
        <title>The complete genome sequence of the Gram-positive bacterium Bacillus subtilis.</title>
        <authorList>
            <person name="Kunst F."/>
            <person name="Ogasawara N."/>
            <person name="Moszer I."/>
            <person name="Albertini A.M."/>
            <person name="Alloni G."/>
            <person name="Azevedo V."/>
            <person name="Bertero M.G."/>
            <person name="Bessieres P."/>
            <person name="Bolotin A."/>
            <person name="Borchert S."/>
            <person name="Borriss R."/>
            <person name="Boursier L."/>
            <person name="Brans A."/>
            <person name="Braun M."/>
            <person name="Brignell S.C."/>
            <person name="Bron S."/>
            <person name="Brouillet S."/>
            <person name="Bruschi C.V."/>
            <person name="Caldwell B."/>
            <person name="Capuano V."/>
            <person name="Carter N.M."/>
            <person name="Choi S.-K."/>
            <person name="Codani J.-J."/>
            <person name="Connerton I.F."/>
            <person name="Cummings N.J."/>
            <person name="Daniel R.A."/>
            <person name="Denizot F."/>
            <person name="Devine K.M."/>
            <person name="Duesterhoeft A."/>
            <person name="Ehrlich S.D."/>
            <person name="Emmerson P.T."/>
            <person name="Entian K.-D."/>
            <person name="Errington J."/>
            <person name="Fabret C."/>
            <person name="Ferrari E."/>
            <person name="Foulger D."/>
            <person name="Fritz C."/>
            <person name="Fujita M."/>
            <person name="Fujita Y."/>
            <person name="Fuma S."/>
            <person name="Galizzi A."/>
            <person name="Galleron N."/>
            <person name="Ghim S.-Y."/>
            <person name="Glaser P."/>
            <person name="Goffeau A."/>
            <person name="Golightly E.J."/>
            <person name="Grandi G."/>
            <person name="Guiseppi G."/>
            <person name="Guy B.J."/>
            <person name="Haga K."/>
            <person name="Haiech J."/>
            <person name="Harwood C.R."/>
            <person name="Henaut A."/>
            <person name="Hilbert H."/>
            <person name="Holsappel S."/>
            <person name="Hosono S."/>
            <person name="Hullo M.-F."/>
            <person name="Itaya M."/>
            <person name="Jones L.-M."/>
            <person name="Joris B."/>
            <person name="Karamata D."/>
            <person name="Kasahara Y."/>
            <person name="Klaerr-Blanchard M."/>
            <person name="Klein C."/>
            <person name="Kobayashi Y."/>
            <person name="Koetter P."/>
            <person name="Koningstein G."/>
            <person name="Krogh S."/>
            <person name="Kumano M."/>
            <person name="Kurita K."/>
            <person name="Lapidus A."/>
            <person name="Lardinois S."/>
            <person name="Lauber J."/>
            <person name="Lazarevic V."/>
            <person name="Lee S.-M."/>
            <person name="Levine A."/>
            <person name="Liu H."/>
            <person name="Masuda S."/>
            <person name="Mauel C."/>
            <person name="Medigue C."/>
            <person name="Medina N."/>
            <person name="Mellado R.P."/>
            <person name="Mizuno M."/>
            <person name="Moestl D."/>
            <person name="Nakai S."/>
            <person name="Noback M."/>
            <person name="Noone D."/>
            <person name="O'Reilly M."/>
            <person name="Ogawa K."/>
            <person name="Ogiwara A."/>
            <person name="Oudega B."/>
            <person name="Park S.-H."/>
            <person name="Parro V."/>
            <person name="Pohl T.M."/>
            <person name="Portetelle D."/>
            <person name="Porwollik S."/>
            <person name="Prescott A.M."/>
            <person name="Presecan E."/>
            <person name="Pujic P."/>
            <person name="Purnelle B."/>
            <person name="Rapoport G."/>
            <person name="Rey M."/>
            <person name="Reynolds S."/>
            <person name="Rieger M."/>
            <person name="Rivolta C."/>
            <person name="Rocha E."/>
            <person name="Roche B."/>
            <person name="Rose M."/>
            <person name="Sadaie Y."/>
            <person name="Sato T."/>
            <person name="Scanlan E."/>
            <person name="Schleich S."/>
            <person name="Schroeter R."/>
            <person name="Scoffone F."/>
            <person name="Sekiguchi J."/>
            <person name="Sekowska A."/>
            <person name="Seror S.J."/>
            <person name="Serror P."/>
            <person name="Shin B.-S."/>
            <person name="Soldo B."/>
            <person name="Sorokin A."/>
            <person name="Tacconi E."/>
            <person name="Takagi T."/>
            <person name="Takahashi H."/>
            <person name="Takemaru K."/>
            <person name="Takeuchi M."/>
            <person name="Tamakoshi A."/>
            <person name="Tanaka T."/>
            <person name="Terpstra P."/>
            <person name="Tognoni A."/>
            <person name="Tosato V."/>
            <person name="Uchiyama S."/>
            <person name="Vandenbol M."/>
            <person name="Vannier F."/>
            <person name="Vassarotti A."/>
            <person name="Viari A."/>
            <person name="Wambutt R."/>
            <person name="Wedler E."/>
            <person name="Wedler H."/>
            <person name="Weitzenegger T."/>
            <person name="Winters P."/>
            <person name="Wipat A."/>
            <person name="Yamamoto H."/>
            <person name="Yamane K."/>
            <person name="Yasumoto K."/>
            <person name="Yata K."/>
            <person name="Yoshida K."/>
            <person name="Yoshikawa H.-F."/>
            <person name="Zumstein E."/>
            <person name="Yoshikawa H."/>
            <person name="Danchin A."/>
        </authorList>
    </citation>
    <scope>NUCLEOTIDE SEQUENCE [LARGE SCALE GENOMIC DNA]</scope>
    <source>
        <strain>168</strain>
    </source>
</reference>
<comment type="subcellular location">
    <subcellularLocation>
        <location evidence="2">Cell membrane</location>
        <topology evidence="2">Multi-pass membrane protein</topology>
    </subcellularLocation>
</comment>
<accession>P94485</accession>
<accession>Q796H5</accession>
<sequence length="91" mass="10031">MNVKKAAAVFSITIPIISAILIINFFTGFMSIPWQGMPVFFPLLLSPIGIILAFVSIKTNKRCAVYGIVLNAIMFPFPFFWFIGGALLFGV</sequence>
<proteinExistence type="predicted"/>
<protein>
    <recommendedName>
        <fullName>Uncharacterized protein YnaG</fullName>
    </recommendedName>
</protein>
<feature type="chain" id="PRO_0000360449" description="Uncharacterized protein YnaG">
    <location>
        <begin position="1"/>
        <end position="91"/>
    </location>
</feature>
<feature type="transmembrane region" description="Helical" evidence="1">
    <location>
        <begin position="6"/>
        <end position="26"/>
    </location>
</feature>
<feature type="transmembrane region" description="Helical" evidence="1">
    <location>
        <begin position="37"/>
        <end position="57"/>
    </location>
</feature>
<feature type="transmembrane region" description="Helical" evidence="1">
    <location>
        <begin position="68"/>
        <end position="88"/>
    </location>
</feature>
<dbReference type="EMBL" id="U66480">
    <property type="protein sequence ID" value="AAB41087.1"/>
    <property type="molecule type" value="Genomic_DNA"/>
</dbReference>
<dbReference type="EMBL" id="AL009126">
    <property type="protein sequence ID" value="CAB13639.1"/>
    <property type="molecule type" value="Genomic_DNA"/>
</dbReference>
<dbReference type="PIR" id="G69887">
    <property type="entry name" value="G69887"/>
</dbReference>
<dbReference type="RefSeq" id="NP_389637.1">
    <property type="nucleotide sequence ID" value="NC_000964.3"/>
</dbReference>
<dbReference type="RefSeq" id="WP_003245005.1">
    <property type="nucleotide sequence ID" value="NZ_OZ025638.1"/>
</dbReference>
<dbReference type="SMR" id="P94485"/>
<dbReference type="FunCoup" id="P94485">
    <property type="interactions" value="30"/>
</dbReference>
<dbReference type="STRING" id="224308.BSU17550"/>
<dbReference type="PaxDb" id="224308-BSU17550"/>
<dbReference type="EnsemblBacteria" id="CAB13639">
    <property type="protein sequence ID" value="CAB13639"/>
    <property type="gene ID" value="BSU_17550"/>
</dbReference>
<dbReference type="GeneID" id="940014"/>
<dbReference type="KEGG" id="bsu:BSU17550"/>
<dbReference type="PATRIC" id="fig|224308.179.peg.1904"/>
<dbReference type="InParanoid" id="P94485"/>
<dbReference type="OrthoDB" id="2927066at2"/>
<dbReference type="BioCyc" id="BSUB:BSU17550-MONOMER"/>
<dbReference type="Proteomes" id="UP000001570">
    <property type="component" value="Chromosome"/>
</dbReference>
<dbReference type="GO" id="GO:0005886">
    <property type="term" value="C:plasma membrane"/>
    <property type="evidence" value="ECO:0007669"/>
    <property type="project" value="UniProtKB-SubCell"/>
</dbReference>
<keyword id="KW-1003">Cell membrane</keyword>
<keyword id="KW-0472">Membrane</keyword>
<keyword id="KW-1185">Reference proteome</keyword>
<keyword id="KW-0812">Transmembrane</keyword>
<keyword id="KW-1133">Transmembrane helix</keyword>
<organism>
    <name type="scientific">Bacillus subtilis (strain 168)</name>
    <dbReference type="NCBI Taxonomy" id="224308"/>
    <lineage>
        <taxon>Bacteria</taxon>
        <taxon>Bacillati</taxon>
        <taxon>Bacillota</taxon>
        <taxon>Bacilli</taxon>
        <taxon>Bacillales</taxon>
        <taxon>Bacillaceae</taxon>
        <taxon>Bacillus</taxon>
    </lineage>
</organism>